<organism>
    <name type="scientific">Escherichia coli (strain K12)</name>
    <dbReference type="NCBI Taxonomy" id="83333"/>
    <lineage>
        <taxon>Bacteria</taxon>
        <taxon>Pseudomonadati</taxon>
        <taxon>Pseudomonadota</taxon>
        <taxon>Gammaproteobacteria</taxon>
        <taxon>Enterobacterales</taxon>
        <taxon>Enterobacteriaceae</taxon>
        <taxon>Escherichia</taxon>
    </lineage>
</organism>
<comment type="function">
    <text>Involved in the transposition of the insertion sequence IS2.</text>
</comment>
<sequence>MDSARALIARGWGVSLVSRCLRVSRAQLHVILRRTDDWMDGRRSRHTDDTDVLLRIHHVIGELPTYGYRRVWALLRRQAELDGMPAINAKRVYRIMRQNALLLERKPAVPPSKRAHTGRVAVKESNQRWCSDGFEFCCDNGERLRVTFALDCCDREALHWAVTTGGFNSETVQDVMLGAVERRFGNDLPSSPVEWLTDNGSCYRANETRQFARMLGLEPKNTAVRSPESNGIAESFVKTIKRDYISIMPKPDGLTAAKNLAEAFEHYNEWHPHSALGYRSPREYLRQRACNGLSDNRCLEI</sequence>
<dbReference type="EMBL" id="U28377">
    <property type="protein sequence ID" value="AAA69213.1"/>
    <property type="molecule type" value="Genomic_DNA"/>
</dbReference>
<dbReference type="EMBL" id="U00096">
    <property type="protein sequence ID" value="AAC76081.1"/>
    <property type="molecule type" value="Genomic_DNA"/>
</dbReference>
<dbReference type="EMBL" id="AP009048">
    <property type="protein sequence ID" value="BAA16573.2"/>
    <property type="molecule type" value="Genomic_DNA"/>
</dbReference>
<dbReference type="PIR" id="A64764">
    <property type="entry name" value="C65092"/>
</dbReference>
<dbReference type="RefSeq" id="NP_061399.1">
    <property type="nucleotide sequence ID" value="NC_002483.1"/>
</dbReference>
<dbReference type="RefSeq" id="NP_417517.1">
    <property type="nucleotide sequence ID" value="NC_000913.3"/>
</dbReference>
<dbReference type="SMR" id="P0CF57"/>
<dbReference type="FunCoup" id="P0CF57">
    <property type="interactions" value="6"/>
</dbReference>
<dbReference type="EnsemblBacteria" id="AAC76081">
    <property type="protein sequence ID" value="AAC76081"/>
    <property type="gene ID" value="b3045"/>
</dbReference>
<dbReference type="GeneID" id="947517"/>
<dbReference type="KEGG" id="ecj:JW3013"/>
<dbReference type="KEGG" id="eco:b0361"/>
<dbReference type="KEGG" id="eco:b1402"/>
<dbReference type="KEGG" id="eco:b1996"/>
<dbReference type="KEGG" id="eco:b2860"/>
<dbReference type="KEGG" id="eco:b3045"/>
<dbReference type="KEGG" id="eco:b4273"/>
<dbReference type="KEGG" id="ecoc:C3026_00665"/>
<dbReference type="KEGG" id="ecoc:C3026_03835"/>
<dbReference type="KEGG" id="ecoc:C3026_06240"/>
<dbReference type="KEGG" id="ecoc:C3026_08175"/>
<dbReference type="KEGG" id="ecoc:C3026_11260"/>
<dbReference type="KEGG" id="ecoc:C3026_15300"/>
<dbReference type="KEGG" id="ecoc:C3026_15695"/>
<dbReference type="KEGG" id="ecoc:C3026_16630"/>
<dbReference type="KEGG" id="ecoc:C3026_23045"/>
<dbReference type="KEGG" id="ecoc:C3026_24215"/>
<dbReference type="EchoBASE" id="EB4741"/>
<dbReference type="HOGENOM" id="CLU_052819_0_0_6"/>
<dbReference type="InParanoid" id="P0CF57"/>
<dbReference type="OMA" id="CHDREAI"/>
<dbReference type="PhylomeDB" id="P0CF57"/>
<dbReference type="BioCyc" id="EcoCyc:MONOMER0-4449"/>
<dbReference type="PRO" id="PR:P0CF57"/>
<dbReference type="Proteomes" id="UP000000625">
    <property type="component" value="Chromosome"/>
</dbReference>
<dbReference type="GO" id="GO:0003677">
    <property type="term" value="F:DNA binding"/>
    <property type="evidence" value="ECO:0007669"/>
    <property type="project" value="UniProtKB-KW"/>
</dbReference>
<dbReference type="GO" id="GO:0015074">
    <property type="term" value="P:DNA integration"/>
    <property type="evidence" value="ECO:0007669"/>
    <property type="project" value="InterPro"/>
</dbReference>
<dbReference type="GO" id="GO:0006310">
    <property type="term" value="P:DNA recombination"/>
    <property type="evidence" value="ECO:0007669"/>
    <property type="project" value="UniProtKB-KW"/>
</dbReference>
<dbReference type="GO" id="GO:0032196">
    <property type="term" value="P:transposition"/>
    <property type="evidence" value="ECO:0007669"/>
    <property type="project" value="UniProtKB-KW"/>
</dbReference>
<dbReference type="Gene3D" id="3.30.420.10">
    <property type="entry name" value="Ribonuclease H-like superfamily/Ribonuclease H"/>
    <property type="match status" value="1"/>
</dbReference>
<dbReference type="InterPro" id="IPR025948">
    <property type="entry name" value="HTH-like_dom"/>
</dbReference>
<dbReference type="InterPro" id="IPR001584">
    <property type="entry name" value="Integrase_cat-core"/>
</dbReference>
<dbReference type="InterPro" id="IPR012337">
    <property type="entry name" value="RNaseH-like_sf"/>
</dbReference>
<dbReference type="InterPro" id="IPR036397">
    <property type="entry name" value="RNaseH_sf"/>
</dbReference>
<dbReference type="InterPro" id="IPR048020">
    <property type="entry name" value="Transpos_IS3"/>
</dbReference>
<dbReference type="NCBIfam" id="NF006918">
    <property type="entry name" value="PRK09409.1"/>
    <property type="match status" value="1"/>
</dbReference>
<dbReference type="NCBIfam" id="NF033516">
    <property type="entry name" value="transpos_IS3"/>
    <property type="match status" value="1"/>
</dbReference>
<dbReference type="PANTHER" id="PTHR37936">
    <property type="entry name" value="TRANSPOSASE INSC FOR INSERTION ELEMENT IS2A-RELATED"/>
    <property type="match status" value="1"/>
</dbReference>
<dbReference type="PANTHER" id="PTHR37936:SF3">
    <property type="entry name" value="TRANSPOSASE INSC FOR INSERTION ELEMENT IS2A-RELATED"/>
    <property type="match status" value="1"/>
</dbReference>
<dbReference type="Pfam" id="PF13276">
    <property type="entry name" value="HTH_21"/>
    <property type="match status" value="1"/>
</dbReference>
<dbReference type="Pfam" id="PF00665">
    <property type="entry name" value="rve"/>
    <property type="match status" value="1"/>
</dbReference>
<dbReference type="SUPFAM" id="SSF53098">
    <property type="entry name" value="Ribonuclease H-like"/>
    <property type="match status" value="1"/>
</dbReference>
<dbReference type="PROSITE" id="PS50994">
    <property type="entry name" value="INTEGRASE"/>
    <property type="match status" value="1"/>
</dbReference>
<accession>P0CF57</accession>
<accession>P0C5W4</accession>
<accession>P19777</accession>
<accession>P76167</accession>
<accession>P76916</accession>
<accession>P77033</accession>
<accession>Q79EJ0</accession>
<gene>
    <name type="primary">insD5</name>
    <name type="ordered locus">b3045</name>
    <name type="ordered locus">JW3013</name>
</gene>
<protein>
    <recommendedName>
        <fullName>Transposase InsD for insertion element IS2I</fullName>
    </recommendedName>
</protein>
<proteinExistence type="predicted"/>
<evidence type="ECO:0000255" key="1">
    <source>
        <dbReference type="PROSITE-ProRule" id="PRU00457"/>
    </source>
</evidence>
<keyword id="KW-0233">DNA recombination</keyword>
<keyword id="KW-0238">DNA-binding</keyword>
<keyword id="KW-1185">Reference proteome</keyword>
<keyword id="KW-0814">Transposable element</keyword>
<keyword id="KW-0815">Transposition</keyword>
<name>INSD5_ECOLI</name>
<reference key="1">
    <citation type="journal article" date="1997" name="Science">
        <title>The complete genome sequence of Escherichia coli K-12.</title>
        <authorList>
            <person name="Blattner F.R."/>
            <person name="Plunkett G. III"/>
            <person name="Bloch C.A."/>
            <person name="Perna N.T."/>
            <person name="Burland V."/>
            <person name="Riley M."/>
            <person name="Collado-Vides J."/>
            <person name="Glasner J.D."/>
            <person name="Rode C.K."/>
            <person name="Mayhew G.F."/>
            <person name="Gregor J."/>
            <person name="Davis N.W."/>
            <person name="Kirkpatrick H.A."/>
            <person name="Goeden M.A."/>
            <person name="Rose D.J."/>
            <person name="Mau B."/>
            <person name="Shao Y."/>
        </authorList>
    </citation>
    <scope>NUCLEOTIDE SEQUENCE [LARGE SCALE GENOMIC DNA]</scope>
    <source>
        <strain>K12 / MG1655 / ATCC 47076</strain>
    </source>
</reference>
<reference key="2">
    <citation type="journal article" date="2006" name="Mol. Syst. Biol.">
        <title>Highly accurate genome sequences of Escherichia coli K-12 strains MG1655 and W3110.</title>
        <authorList>
            <person name="Hayashi K."/>
            <person name="Morooka N."/>
            <person name="Yamamoto Y."/>
            <person name="Fujita K."/>
            <person name="Isono K."/>
            <person name="Choi S."/>
            <person name="Ohtsubo E."/>
            <person name="Baba T."/>
            <person name="Wanner B.L."/>
            <person name="Mori H."/>
            <person name="Horiuchi T."/>
        </authorList>
    </citation>
    <scope>NUCLEOTIDE SEQUENCE [LARGE SCALE GENOMIC DNA]</scope>
    <source>
        <strain>K12 / W3110 / ATCC 27325 / DSM 5911</strain>
    </source>
</reference>
<feature type="chain" id="PRO_0000393576" description="Transposase InsD for insertion element IS2I">
    <location>
        <begin position="1"/>
        <end position="301"/>
    </location>
</feature>
<feature type="domain" description="Integrase catalytic" evidence="1">
    <location>
        <begin position="106"/>
        <end position="289"/>
    </location>
</feature>